<reference key="1">
    <citation type="journal article" date="1999" name="Plant Mol. Biol.">
        <title>Identification of a rice APETALA3 homologue by yeast two-hybrid screening.</title>
        <authorList>
            <person name="Moon Y.-H."/>
            <person name="Jung J.-Y."/>
            <person name="Kang H.-G."/>
            <person name="An G."/>
        </authorList>
    </citation>
    <scope>NUCLEOTIDE SEQUENCE [MRNA]</scope>
    <scope>TISSUE SPECIFICITY</scope>
    <scope>INTERACTION WITH MADS4</scope>
    <source>
        <tissue>Flower</tissue>
    </source>
</reference>
<reference key="2">
    <citation type="journal article" date="1999" name="DNA Res.">
        <title>Isolation and characterization of rice MADS box gene homologues and their RFLP mapping.</title>
        <authorList>
            <person name="Shinozuka Y."/>
            <person name="Kojima S."/>
            <person name="Shomura A."/>
            <person name="Ichimura H."/>
            <person name="Yano M."/>
            <person name="Yamamoto K."/>
            <person name="Sasaki T."/>
        </authorList>
    </citation>
    <scope>NUCLEOTIDE SEQUENCE [MRNA]</scope>
    <source>
        <strain>cv. Nipponbare</strain>
        <tissue>Panicle</tissue>
    </source>
</reference>
<reference key="3">
    <citation type="journal article" date="2003" name="Development">
        <title>SUPERWOMAN1 and DROOPING LEAF genes control floral organ identity in rice.</title>
        <authorList>
            <person name="Nagasawa N."/>
            <person name="Miyoshi M."/>
            <person name="Sano Y."/>
            <person name="Satoh H."/>
            <person name="Hirano H.-Y."/>
            <person name="Sakai H."/>
            <person name="Nagato Y."/>
        </authorList>
    </citation>
    <scope>NUCLEOTIDE SEQUENCE [GENOMIC DNA]</scope>
    <scope>FUNCTION</scope>
    <scope>TISSUE SPECIFICITY</scope>
    <source>
        <strain>cv. YT14</strain>
    </source>
</reference>
<reference key="4">
    <citation type="journal article" date="2005" name="Nature">
        <title>The map-based sequence of the rice genome.</title>
        <authorList>
            <consortium name="International rice genome sequencing project (IRGSP)"/>
        </authorList>
    </citation>
    <scope>NUCLEOTIDE SEQUENCE [LARGE SCALE GENOMIC DNA]</scope>
    <source>
        <strain>cv. Nipponbare</strain>
    </source>
</reference>
<reference key="5">
    <citation type="journal article" date="2008" name="Nucleic Acids Res.">
        <title>The rice annotation project database (RAP-DB): 2008 update.</title>
        <authorList>
            <consortium name="The rice annotation project (RAP)"/>
        </authorList>
    </citation>
    <scope>GENOME REANNOTATION</scope>
    <source>
        <strain>cv. Nipponbare</strain>
    </source>
</reference>
<reference key="6">
    <citation type="journal article" date="2013" name="Rice">
        <title>Improvement of the Oryza sativa Nipponbare reference genome using next generation sequence and optical map data.</title>
        <authorList>
            <person name="Kawahara Y."/>
            <person name="de la Bastide M."/>
            <person name="Hamilton J.P."/>
            <person name="Kanamori H."/>
            <person name="McCombie W.R."/>
            <person name="Ouyang S."/>
            <person name="Schwartz D.C."/>
            <person name="Tanaka T."/>
            <person name="Wu J."/>
            <person name="Zhou S."/>
            <person name="Childs K.L."/>
            <person name="Davidson R.M."/>
            <person name="Lin H."/>
            <person name="Quesada-Ocampo L."/>
            <person name="Vaillancourt B."/>
            <person name="Sakai H."/>
            <person name="Lee S.S."/>
            <person name="Kim J."/>
            <person name="Numa H."/>
            <person name="Itoh T."/>
            <person name="Buell C.R."/>
            <person name="Matsumoto T."/>
        </authorList>
    </citation>
    <scope>GENOME REANNOTATION</scope>
    <source>
        <strain>cv. Nipponbare</strain>
    </source>
</reference>
<reference key="7">
    <citation type="journal article" date="2003" name="Science">
        <title>Collection, mapping, and annotation of over 28,000 cDNA clones from japonica rice.</title>
        <authorList>
            <consortium name="The rice full-length cDNA consortium"/>
        </authorList>
    </citation>
    <scope>NUCLEOTIDE SEQUENCE [LARGE SCALE MRNA]</scope>
    <source>
        <strain>cv. Nipponbare</strain>
    </source>
</reference>
<reference key="8">
    <citation type="journal article" date="2003" name="Plant Mol. Biol.">
        <title>Functional analysis of the rice AP3 homologue OsMADS16 by RNA interference.</title>
        <authorList>
            <person name="Xiao H."/>
            <person name="Wang Y."/>
            <person name="Liu D."/>
            <person name="Wang W."/>
            <person name="Li X."/>
            <person name="Zhao X."/>
            <person name="Xu J."/>
            <person name="Zhai W."/>
            <person name="Zhu L."/>
        </authorList>
    </citation>
    <scope>FUNCTION</scope>
    <scope>TISSUE SPECIFICITY</scope>
</reference>
<reference key="9">
    <citation type="journal article" date="2003" name="Planta">
        <title>Alteration of floral organ identity in rice through ectopic expression of OsMADS16.</title>
        <authorList>
            <person name="Lee S."/>
            <person name="Jeon J.-S."/>
            <person name="An K."/>
            <person name="Moon Y.-H."/>
            <person name="Lee S.-H."/>
            <person name="Chung Y.-Y."/>
            <person name="An G."/>
        </authorList>
    </citation>
    <scope>FUNCTION</scope>
    <scope>TISSUE SPECIFICITY</scope>
    <scope>INTERACTION WITH MADS4; MADS6 AND MADS8</scope>
</reference>
<dbReference type="EMBL" id="AF077760">
    <property type="protein sequence ID" value="AAD19872.1"/>
    <property type="molecule type" value="mRNA"/>
</dbReference>
<dbReference type="EMBL" id="AB003323">
    <property type="protein sequence ID" value="BAA81881.1"/>
    <property type="molecule type" value="mRNA"/>
</dbReference>
<dbReference type="EMBL" id="AF424549">
    <property type="protein sequence ID" value="AAL18851.1"/>
    <property type="molecule type" value="Genomic_DNA"/>
</dbReference>
<dbReference type="EMBL" id="AP004329">
    <property type="protein sequence ID" value="BAD54066.1"/>
    <property type="molecule type" value="Genomic_DNA"/>
</dbReference>
<dbReference type="EMBL" id="AP005463">
    <property type="protein sequence ID" value="BAD54565.1"/>
    <property type="molecule type" value="Genomic_DNA"/>
</dbReference>
<dbReference type="EMBL" id="AP008212">
    <property type="protein sequence ID" value="BAF20474.1"/>
    <property type="molecule type" value="Genomic_DNA"/>
</dbReference>
<dbReference type="EMBL" id="AP014962">
    <property type="protein sequence ID" value="BAS99468.1"/>
    <property type="molecule type" value="Genomic_DNA"/>
</dbReference>
<dbReference type="EMBL" id="AK069317">
    <property type="protein sequence ID" value="BAG91373.1"/>
    <property type="molecule type" value="mRNA"/>
</dbReference>
<dbReference type="RefSeq" id="XP_015641661.1">
    <property type="nucleotide sequence ID" value="XM_015786175.1"/>
</dbReference>
<dbReference type="SMR" id="Q944S9"/>
<dbReference type="FunCoup" id="Q944S9">
    <property type="interactions" value="42"/>
</dbReference>
<dbReference type="IntAct" id="Q944S9">
    <property type="interactions" value="6"/>
</dbReference>
<dbReference type="STRING" id="39947.Q944S9"/>
<dbReference type="PaxDb" id="39947-Q944S9"/>
<dbReference type="EnsemblPlants" id="Os06t0712700-01">
    <property type="protein sequence ID" value="Os06t0712700-01"/>
    <property type="gene ID" value="Os06g0712700"/>
</dbReference>
<dbReference type="Gramene" id="Os06t0712700-01">
    <property type="protein sequence ID" value="Os06t0712700-01"/>
    <property type="gene ID" value="Os06g0712700"/>
</dbReference>
<dbReference type="KEGG" id="dosa:Os06g0712700"/>
<dbReference type="eggNOG" id="KOG0014">
    <property type="taxonomic scope" value="Eukaryota"/>
</dbReference>
<dbReference type="HOGENOM" id="CLU_053053_0_4_1"/>
<dbReference type="InParanoid" id="Q944S9"/>
<dbReference type="OMA" id="IFAFRLQ"/>
<dbReference type="OrthoDB" id="1898716at2759"/>
<dbReference type="PlantReactome" id="R-OSA-9609102">
    <property type="pathway name" value="Flower development"/>
</dbReference>
<dbReference type="Proteomes" id="UP000000763">
    <property type="component" value="Chromosome 6"/>
</dbReference>
<dbReference type="Proteomes" id="UP000059680">
    <property type="component" value="Chromosome 6"/>
</dbReference>
<dbReference type="GO" id="GO:0005634">
    <property type="term" value="C:nucleus"/>
    <property type="evidence" value="ECO:0007669"/>
    <property type="project" value="UniProtKB-SubCell"/>
</dbReference>
<dbReference type="GO" id="GO:0000981">
    <property type="term" value="F:DNA-binding transcription factor activity, RNA polymerase II-specific"/>
    <property type="evidence" value="ECO:0000318"/>
    <property type="project" value="GO_Central"/>
</dbReference>
<dbReference type="GO" id="GO:0046983">
    <property type="term" value="F:protein dimerization activity"/>
    <property type="evidence" value="ECO:0007669"/>
    <property type="project" value="InterPro"/>
</dbReference>
<dbReference type="GO" id="GO:0000978">
    <property type="term" value="F:RNA polymerase II cis-regulatory region sequence-specific DNA binding"/>
    <property type="evidence" value="ECO:0000318"/>
    <property type="project" value="GO_Central"/>
</dbReference>
<dbReference type="GO" id="GO:0030154">
    <property type="term" value="P:cell differentiation"/>
    <property type="evidence" value="ECO:0007669"/>
    <property type="project" value="UniProtKB-KW"/>
</dbReference>
<dbReference type="GO" id="GO:0045944">
    <property type="term" value="P:positive regulation of transcription by RNA polymerase II"/>
    <property type="evidence" value="ECO:0007669"/>
    <property type="project" value="InterPro"/>
</dbReference>
<dbReference type="GO" id="GO:0006357">
    <property type="term" value="P:regulation of transcription by RNA polymerase II"/>
    <property type="evidence" value="ECO:0000318"/>
    <property type="project" value="GO_Central"/>
</dbReference>
<dbReference type="GO" id="GO:0010097">
    <property type="term" value="P:specification of stamen identity"/>
    <property type="evidence" value="ECO:0000304"/>
    <property type="project" value="AgBase"/>
</dbReference>
<dbReference type="CDD" id="cd00265">
    <property type="entry name" value="MADS_MEF2_like"/>
    <property type="match status" value="1"/>
</dbReference>
<dbReference type="FunFam" id="3.40.1810.10:FF:000016">
    <property type="entry name" value="MADS-box transcription factor 16"/>
    <property type="match status" value="1"/>
</dbReference>
<dbReference type="Gene3D" id="3.40.1810.10">
    <property type="entry name" value="Transcription factor, MADS-box"/>
    <property type="match status" value="1"/>
</dbReference>
<dbReference type="InterPro" id="IPR050142">
    <property type="entry name" value="MADS-box/MEF2_TF"/>
</dbReference>
<dbReference type="InterPro" id="IPR033896">
    <property type="entry name" value="MEF2-like_N"/>
</dbReference>
<dbReference type="InterPro" id="IPR002487">
    <property type="entry name" value="TF_Kbox"/>
</dbReference>
<dbReference type="InterPro" id="IPR002100">
    <property type="entry name" value="TF_MADSbox"/>
</dbReference>
<dbReference type="InterPro" id="IPR036879">
    <property type="entry name" value="TF_MADSbox_sf"/>
</dbReference>
<dbReference type="PANTHER" id="PTHR48019">
    <property type="entry name" value="SERUM RESPONSE FACTOR HOMOLOG"/>
    <property type="match status" value="1"/>
</dbReference>
<dbReference type="Pfam" id="PF01486">
    <property type="entry name" value="K-box"/>
    <property type="match status" value="1"/>
</dbReference>
<dbReference type="Pfam" id="PF00319">
    <property type="entry name" value="SRF-TF"/>
    <property type="match status" value="1"/>
</dbReference>
<dbReference type="PRINTS" id="PR00404">
    <property type="entry name" value="MADSDOMAIN"/>
</dbReference>
<dbReference type="SMART" id="SM00432">
    <property type="entry name" value="MADS"/>
    <property type="match status" value="1"/>
</dbReference>
<dbReference type="SUPFAM" id="SSF55455">
    <property type="entry name" value="SRF-like"/>
    <property type="match status" value="1"/>
</dbReference>
<dbReference type="PROSITE" id="PS51297">
    <property type="entry name" value="K_BOX"/>
    <property type="match status" value="1"/>
</dbReference>
<dbReference type="PROSITE" id="PS50066">
    <property type="entry name" value="MADS_BOX_2"/>
    <property type="match status" value="1"/>
</dbReference>
<keyword id="KW-0010">Activator</keyword>
<keyword id="KW-0217">Developmental protein</keyword>
<keyword id="KW-0221">Differentiation</keyword>
<keyword id="KW-0238">DNA-binding</keyword>
<keyword id="KW-0287">Flowering</keyword>
<keyword id="KW-0539">Nucleus</keyword>
<keyword id="KW-1185">Reference proteome</keyword>
<keyword id="KW-0804">Transcription</keyword>
<keyword id="KW-0805">Transcription regulation</keyword>
<organism>
    <name type="scientific">Oryza sativa subsp. japonica</name>
    <name type="common">Rice</name>
    <dbReference type="NCBI Taxonomy" id="39947"/>
    <lineage>
        <taxon>Eukaryota</taxon>
        <taxon>Viridiplantae</taxon>
        <taxon>Streptophyta</taxon>
        <taxon>Embryophyta</taxon>
        <taxon>Tracheophyta</taxon>
        <taxon>Spermatophyta</taxon>
        <taxon>Magnoliopsida</taxon>
        <taxon>Liliopsida</taxon>
        <taxon>Poales</taxon>
        <taxon>Poaceae</taxon>
        <taxon>BOP clade</taxon>
        <taxon>Oryzoideae</taxon>
        <taxon>Oryzeae</taxon>
        <taxon>Oryzinae</taxon>
        <taxon>Oryza</taxon>
        <taxon>Oryza sativa</taxon>
    </lineage>
</organism>
<accession>Q944S9</accession>
<accession>Q0D9J9</accession>
<accession>Q9XJ65</accession>
<accession>Q9ZPM9</accession>
<sequence>MGRGKIEIKRIENATNRQVTYSKRRTGIMKKARELTVLCDAQVAIIMFSSTGKYHEFCSPSTDIKGIFDRYQQAIGTSLWIEQYENMQRTLSHLKDINRNLRTEIRQRMGEDLDGLEFDELRGLEQNVDAALKEVRHRKYHVITTQTETYKKKVKHSYEAYETLQQELGLREEPAFGFVDNTGGGWDGGAGAGAAADMFAFRVVPSQPNLHGMAYGGNHDLRLG</sequence>
<comment type="function">
    <text evidence="4 5 6">Probable transcription factor involved in the development of floral organs. Required for normal development of lodicules and stamens (whorls 2 and 3). May function as a heterodimer with MADS4.</text>
</comment>
<comment type="subunit">
    <text>May interact with the K-box of MADS4, MADS6 and MADS8. May form a heterodimer with MADS4.</text>
</comment>
<comment type="subcellular location">
    <subcellularLocation>
        <location evidence="7">Nucleus</location>
    </subcellularLocation>
</comment>
<comment type="tissue specificity">
    <text evidence="3 4 5 6">Expressed in lodicules, stamens and carpels.</text>
</comment>
<comment type="miscellaneous">
    <text>Inhibition of MADS16 expression by RNAi reduces expression of MADS4, and transforms lodicules and stamens into palea/lemma-like and carpel-like organs, respectively.</text>
</comment>
<evidence type="ECO:0000255" key="1">
    <source>
        <dbReference type="PROSITE-ProRule" id="PRU00251"/>
    </source>
</evidence>
<evidence type="ECO:0000255" key="2">
    <source>
        <dbReference type="PROSITE-ProRule" id="PRU00629"/>
    </source>
</evidence>
<evidence type="ECO:0000269" key="3">
    <source>
    </source>
</evidence>
<evidence type="ECO:0000269" key="4">
    <source>
    </source>
</evidence>
<evidence type="ECO:0000269" key="5">
    <source>
    </source>
</evidence>
<evidence type="ECO:0000269" key="6">
    <source>
    </source>
</evidence>
<evidence type="ECO:0000305" key="7"/>
<gene>
    <name type="primary">MADS16</name>
    <name type="synonym">SPW1</name>
    <name type="ordered locus">Os06g0712700</name>
    <name type="ordered locus">LOC_Os06g49840</name>
    <name type="ORF">OJ1663_H12.32</name>
    <name type="ORF">P0712G01.7</name>
</gene>
<feature type="chain" id="PRO_0000199501" description="MADS-box transcription factor 16">
    <location>
        <begin position="1"/>
        <end position="224"/>
    </location>
</feature>
<feature type="domain" description="MADS-box" evidence="1">
    <location>
        <begin position="1"/>
        <end position="61"/>
    </location>
</feature>
<feature type="domain" description="K-box" evidence="2">
    <location>
        <begin position="84"/>
        <end position="174"/>
    </location>
</feature>
<feature type="sequence conflict" description="In Ref. 1; AAD19872 and 3; AAL18851." evidence="7" ref="1 3">
    <original>E</original>
    <variation>K</variation>
    <location>
        <position position="12"/>
    </location>
</feature>
<feature type="sequence conflict" description="In Ref. 1; AAD19872." evidence="7" ref="1">
    <original>T</original>
    <variation>S</variation>
    <location>
        <position position="144"/>
    </location>
</feature>
<feature type="sequence conflict" description="In Ref. 1; AAD19872." evidence="7" ref="1">
    <original>E</original>
    <variation>K</variation>
    <location>
        <position position="162"/>
    </location>
</feature>
<feature type="sequence conflict" description="In Ref. 1; AAD19872." evidence="7" ref="1">
    <original>R</original>
    <variation>C</variation>
    <location>
        <position position="171"/>
    </location>
</feature>
<feature type="sequence conflict" description="In Ref. 1; AAD19872." evidence="7" ref="1">
    <original>FG</original>
    <variation>W</variation>
    <location>
        <begin position="176"/>
        <end position="177"/>
    </location>
</feature>
<protein>
    <recommendedName>
        <fullName>MADS-box transcription factor 16</fullName>
    </recommendedName>
    <alternativeName>
        <fullName>OsMADS16</fullName>
    </alternativeName>
    <alternativeName>
        <fullName>Protein APETALA3-like</fullName>
    </alternativeName>
    <alternativeName>
        <fullName>Protein SUPERWOMAN1</fullName>
    </alternativeName>
</protein>
<name>MAD16_ORYSJ</name>
<proteinExistence type="evidence at protein level"/>